<sequence length="430" mass="48138">MIQIVTVRSGDSVYSLASKYGSTPDEIVKDNGLNPAETLVVGQALIVNTKGNNYYVQPGDSLYRISQTYNVPLASLAKVNNLSLKSILHVGQQLYVPKGTKRAVESIAYLQPSTIPIKESLVNATRAINPFLTYLAYFSFEAKRDGTLKEPTETAKIANIATQGKTIPMLVITNIENGNFSADLTSVILRDATIQNKFITNILQTAQKYGMRDIHFDFESVAPEDREAYNRFLRNVKTRLPSGYTLSTTLVPKTSSNQKGKFFEAHDYKAQGQIVDFVVNMTYDWGWQGGPPMAISPIGPVKEVLQYAKSQMPPQKIMMGQNLYGFDWKLPFKQGNPPAKAISSVAAVALARKYNVPIRYDFTAQAPHFNYFDENGVQHEVWFEDSRSVQSKFNLMKEQGIGGISYWKIGLPFPQNWRLLVENFTITKKG</sequence>
<comment type="function">
    <text evidence="4">N-acetylglucosaminidase involved in cortex peptidoglycan degradation during germination. Cleaves only partially degraded spore peptidoglycans. Recognizes muramic acid delta-lactam residues specific to spore peptidoglycans.</text>
</comment>
<comment type="activity regulation">
    <text evidence="4">Inhibited by diethylpyrocarbonate.</text>
</comment>
<comment type="biophysicochemical properties">
    <phDependence>
        <text evidence="4">Optimum pH is 6.0.</text>
    </phDependence>
</comment>
<comment type="subcellular location">
    <subcellularLocation>
        <location evidence="4">Spore cortex</location>
    </subcellularLocation>
    <text evidence="4">Probably localizes to the exterior of the cortex layer.</text>
</comment>
<comment type="similarity">
    <text evidence="6">Belongs to the glycosyl hydrolase 18 family. Chitinase class II subfamily.</text>
</comment>
<feature type="chain" id="PRO_0000444792" description="Cortical fragment-lytic enzyme">
    <location>
        <begin position="1"/>
        <end position="430"/>
    </location>
</feature>
<feature type="domain" description="LysM 1" evidence="2">
    <location>
        <begin position="3"/>
        <end position="47"/>
    </location>
</feature>
<feature type="domain" description="LysM 2" evidence="2">
    <location>
        <begin position="52"/>
        <end position="96"/>
    </location>
</feature>
<feature type="domain" description="GH18" evidence="3">
    <location>
        <begin position="104"/>
        <end position="430"/>
    </location>
</feature>
<feature type="active site" description="Proton donor" evidence="3">
    <location>
        <position position="219"/>
    </location>
</feature>
<keyword id="KW-0903">Direct protein sequencing</keyword>
<keyword id="KW-0309">Germination</keyword>
<keyword id="KW-0326">Glycosidase</keyword>
<keyword id="KW-0378">Hydrolase</keyword>
<keyword id="KW-0677">Repeat</keyword>
<protein>
    <recommendedName>
        <fullName evidence="5">Cortical fragment-lytic enzyme</fullName>
        <shortName evidence="5">CFLE</shortName>
        <ecNumber evidence="4">3.2.1.-</ecNumber>
    </recommendedName>
    <alternativeName>
        <fullName evidence="5">Germination-specific spore peptidoglycan hydrolase</fullName>
    </alternativeName>
    <alternativeName>
        <fullName evidence="1">Spore peptidoglycan N-acetylglucosaminidase</fullName>
    </alternativeName>
</protein>
<reference key="1">
    <citation type="journal article" date="2000" name="J. Bacteriol.">
        <title>A novel spore peptidoglycan hydrolase of Bacillus cereus: biochemical characterization and nucleotide sequence of the corresponding gene, sleL.</title>
        <authorList>
            <person name="Chen Y."/>
            <person name="Fukuoka S."/>
            <person name="Makino S."/>
        </authorList>
    </citation>
    <scope>NUCLEOTIDE SEQUENCE [GENOMIC DNA]</scope>
    <scope>PROTEIN SEQUENCE OF 1-20; 51-63; 198-208; 360-371; 398-408 AND 409-418</scope>
    <scope>FUNCTION</scope>
    <scope>ACTIVITY REGULATION</scope>
    <scope>BIOPHYSICOCHEMICAL PROPERTIES</scope>
    <scope>SUBCELLULAR LOCATION</scope>
    <source>
        <strain>NBRC 13597</strain>
    </source>
</reference>
<proteinExistence type="evidence at protein level"/>
<organism>
    <name type="scientific">Bacillus cereus</name>
    <dbReference type="NCBI Taxonomy" id="1396"/>
    <lineage>
        <taxon>Bacteria</taxon>
        <taxon>Bacillati</taxon>
        <taxon>Bacillota</taxon>
        <taxon>Bacilli</taxon>
        <taxon>Bacillales</taxon>
        <taxon>Bacillaceae</taxon>
        <taxon>Bacillus</taxon>
        <taxon>Bacillus cereus group</taxon>
    </lineage>
</organism>
<accession>Q9K3E4</accession>
<gene>
    <name evidence="5" type="primary">sleL</name>
</gene>
<dbReference type="EC" id="3.2.1.-" evidence="4"/>
<dbReference type="EMBL" id="AB029921">
    <property type="protein sequence ID" value="BAA92376.1"/>
    <property type="molecule type" value="Genomic_DNA"/>
</dbReference>
<dbReference type="SMR" id="Q9K3E4"/>
<dbReference type="CAZy" id="CBM50">
    <property type="family name" value="Carbohydrate-Binding Module Family 50"/>
</dbReference>
<dbReference type="CAZy" id="GH18">
    <property type="family name" value="Glycoside Hydrolase Family 18"/>
</dbReference>
<dbReference type="GO" id="GO:0012505">
    <property type="term" value="C:endomembrane system"/>
    <property type="evidence" value="ECO:0007669"/>
    <property type="project" value="TreeGrafter"/>
</dbReference>
<dbReference type="GO" id="GO:0043595">
    <property type="term" value="C:endospore cortex"/>
    <property type="evidence" value="ECO:0007669"/>
    <property type="project" value="UniProtKB-SubCell"/>
</dbReference>
<dbReference type="GO" id="GO:0008061">
    <property type="term" value="F:chitin binding"/>
    <property type="evidence" value="ECO:0007669"/>
    <property type="project" value="InterPro"/>
</dbReference>
<dbReference type="GO" id="GO:0016798">
    <property type="term" value="F:hydrolase activity, acting on glycosyl bonds"/>
    <property type="evidence" value="ECO:0007669"/>
    <property type="project" value="UniProtKB-KW"/>
</dbReference>
<dbReference type="GO" id="GO:0070492">
    <property type="term" value="F:oligosaccharide binding"/>
    <property type="evidence" value="ECO:0007669"/>
    <property type="project" value="TreeGrafter"/>
</dbReference>
<dbReference type="GO" id="GO:0005975">
    <property type="term" value="P:carbohydrate metabolic process"/>
    <property type="evidence" value="ECO:0007669"/>
    <property type="project" value="InterPro"/>
</dbReference>
<dbReference type="CDD" id="cd02874">
    <property type="entry name" value="GH18_CFLE_spore_hydrolase"/>
    <property type="match status" value="1"/>
</dbReference>
<dbReference type="CDD" id="cd00118">
    <property type="entry name" value="LysM"/>
    <property type="match status" value="2"/>
</dbReference>
<dbReference type="Gene3D" id="3.10.50.10">
    <property type="match status" value="1"/>
</dbReference>
<dbReference type="Gene3D" id="3.20.20.80">
    <property type="entry name" value="Glycosidases"/>
    <property type="match status" value="1"/>
</dbReference>
<dbReference type="Gene3D" id="3.10.350.10">
    <property type="entry name" value="LysM domain"/>
    <property type="match status" value="2"/>
</dbReference>
<dbReference type="InterPro" id="IPR041704">
    <property type="entry name" value="CFLE_GH18"/>
</dbReference>
<dbReference type="InterPro" id="IPR011583">
    <property type="entry name" value="Chitinase_II/V-like_cat"/>
</dbReference>
<dbReference type="InterPro" id="IPR029070">
    <property type="entry name" value="Chitinase_insertion_sf"/>
</dbReference>
<dbReference type="InterPro" id="IPR001223">
    <property type="entry name" value="Glyco_hydro18_cat"/>
</dbReference>
<dbReference type="InterPro" id="IPR017853">
    <property type="entry name" value="Glycoside_hydrolase_SF"/>
</dbReference>
<dbReference type="InterPro" id="IPR018392">
    <property type="entry name" value="LysM_dom"/>
</dbReference>
<dbReference type="InterPro" id="IPR036779">
    <property type="entry name" value="LysM_dom_sf"/>
</dbReference>
<dbReference type="PANTHER" id="PTHR46066:SF2">
    <property type="entry name" value="CHITINASE DOMAIN-CONTAINING PROTEIN 1"/>
    <property type="match status" value="1"/>
</dbReference>
<dbReference type="PANTHER" id="PTHR46066">
    <property type="entry name" value="CHITINASE DOMAIN-CONTAINING PROTEIN 1 FAMILY MEMBER"/>
    <property type="match status" value="1"/>
</dbReference>
<dbReference type="Pfam" id="PF00704">
    <property type="entry name" value="Glyco_hydro_18"/>
    <property type="match status" value="1"/>
</dbReference>
<dbReference type="Pfam" id="PF01476">
    <property type="entry name" value="LysM"/>
    <property type="match status" value="2"/>
</dbReference>
<dbReference type="SMART" id="SM00636">
    <property type="entry name" value="Glyco_18"/>
    <property type="match status" value="1"/>
</dbReference>
<dbReference type="SMART" id="SM00257">
    <property type="entry name" value="LysM"/>
    <property type="match status" value="2"/>
</dbReference>
<dbReference type="SUPFAM" id="SSF51445">
    <property type="entry name" value="(Trans)glycosidases"/>
    <property type="match status" value="1"/>
</dbReference>
<dbReference type="SUPFAM" id="SSF54106">
    <property type="entry name" value="LysM domain"/>
    <property type="match status" value="2"/>
</dbReference>
<dbReference type="PROSITE" id="PS51910">
    <property type="entry name" value="GH18_2"/>
    <property type="match status" value="1"/>
</dbReference>
<dbReference type="PROSITE" id="PS51782">
    <property type="entry name" value="LYSM"/>
    <property type="match status" value="2"/>
</dbReference>
<evidence type="ECO:0000250" key="1">
    <source>
        <dbReference type="UniProtKB" id="P37531"/>
    </source>
</evidence>
<evidence type="ECO:0000255" key="2">
    <source>
        <dbReference type="PROSITE-ProRule" id="PRU01118"/>
    </source>
</evidence>
<evidence type="ECO:0000255" key="3">
    <source>
        <dbReference type="PROSITE-ProRule" id="PRU01258"/>
    </source>
</evidence>
<evidence type="ECO:0000269" key="4">
    <source>
    </source>
</evidence>
<evidence type="ECO:0000303" key="5">
    <source>
    </source>
</evidence>
<evidence type="ECO:0000305" key="6"/>
<name>SLEL_BACCE</name>